<comment type="function">
    <text evidence="4">Component of the CCR4-NOT complex which is one of the major cellular mRNA deadenylases and is linked to various cellular processes including bulk mRNA degradation, miRNA-mediated repression, translational repression during translational initiation and general transcription regulation. Additional complex functions may be a consequence of its influence on mRNA expression. Required for the CCR4-NOT complex structural integrity. Can repress transcription and may link the CCR4-NOT complex to transcriptional regulation; the repressive function may specifically involve the N-Cor repressor complex containing HDAC3, NCOR1 and NCOR2. Involved in the maintenance of embryonic stem (ES) cell identity; prevents their differentiation towards extraembryonic trophectoderm lineages.</text>
</comment>
<comment type="subunit">
    <text evidence="2">Component of the CCR4-NOT complex; distinct complexes seem to exist that differ in the participation of probably mutually exclusive catalytic subunits. In the complex interacts directly with CNOT3. Interacts with NCOR1, NCOR2. HDAC3 and GPS2 (By similarity).</text>
</comment>
<comment type="subcellular location">
    <subcellularLocation>
        <location evidence="1">Cytoplasm</location>
    </subcellularLocation>
    <subcellularLocation>
        <location evidence="7">Nucleus</location>
    </subcellularLocation>
</comment>
<comment type="alternative products">
    <event type="alternative splicing"/>
    <isoform>
        <id>Q8C5L3-1</id>
        <name>1</name>
        <sequence type="displayed"/>
    </isoform>
    <isoform>
        <id>Q8C5L3-2</id>
        <name>2</name>
        <sequence type="described" ref="VSP_009918"/>
    </isoform>
    <isoform>
        <id>Q8C5L3-3</id>
        <name>3</name>
        <sequence type="described" ref="VSP_009917"/>
    </isoform>
</comment>
<comment type="developmental stage">
    <text evidence="4">Expressed in embryonic stem (ES) cells and in inner cell mass (ICM) of the blastocyst.</text>
</comment>
<comment type="similarity">
    <text evidence="7">Belongs to the CNOT2/3/5 family.</text>
</comment>
<comment type="sequence caution" evidence="7">
    <conflict type="frameshift">
        <sequence resource="EMBL-CDS" id="AAH43133"/>
    </conflict>
</comment>
<proteinExistence type="evidence at protein level"/>
<name>CNOT2_MOUSE</name>
<gene>
    <name type="primary">Cnot2</name>
</gene>
<feature type="chain" id="PRO_0000198332" description="CCR4-NOT transcription complex subunit 2">
    <location>
        <begin position="1"/>
        <end position="540"/>
    </location>
</feature>
<feature type="region of interest" description="Disordered" evidence="3">
    <location>
        <begin position="96"/>
        <end position="126"/>
    </location>
</feature>
<feature type="region of interest" description="Disordered" evidence="3">
    <location>
        <begin position="276"/>
        <end position="342"/>
    </location>
</feature>
<feature type="compositionally biased region" description="Polar residues" evidence="3">
    <location>
        <begin position="96"/>
        <end position="123"/>
    </location>
</feature>
<feature type="compositionally biased region" description="Low complexity" evidence="3">
    <location>
        <begin position="300"/>
        <end position="312"/>
    </location>
</feature>
<feature type="compositionally biased region" description="Polar residues" evidence="3">
    <location>
        <begin position="321"/>
        <end position="333"/>
    </location>
</feature>
<feature type="modified residue" description="Phosphothreonine" evidence="2">
    <location>
        <position position="93"/>
    </location>
</feature>
<feature type="modified residue" description="Phosphoserine" evidence="2">
    <location>
        <position position="126"/>
    </location>
</feature>
<feature type="modified residue" description="Phosphoserine" evidence="8">
    <location>
        <position position="157"/>
    </location>
</feature>
<feature type="modified residue" description="Phosphoserine" evidence="8">
    <location>
        <position position="165"/>
    </location>
</feature>
<feature type="modified residue" description="Phosphoserine" evidence="8">
    <location>
        <position position="169"/>
    </location>
</feature>
<feature type="modified residue" description="Phosphoserine" evidence="2">
    <location>
        <position position="242"/>
    </location>
</feature>
<feature type="modified residue" description="Phosphoserine" evidence="2">
    <location>
        <position position="274"/>
    </location>
</feature>
<feature type="splice variant" id="VSP_009917" description="In isoform 3." evidence="6">
    <location>
        <begin position="1"/>
        <end position="85"/>
    </location>
</feature>
<feature type="splice variant" id="VSP_009918" description="In isoform 2." evidence="5">
    <original>MVRTDGHTLSEKRNY</original>
    <variation>MLKEVA</variation>
    <location>
        <begin position="1"/>
        <end position="15"/>
    </location>
</feature>
<feature type="sequence conflict" description="In Ref. 1; BAC37134." evidence="7" ref="1">
    <original>G</original>
    <variation>S</variation>
    <location>
        <position position="148"/>
    </location>
</feature>
<feature type="sequence conflict" description="In Ref. 2; AAH43133." evidence="7" ref="2">
    <original>H</original>
    <variation>Y</variation>
    <location>
        <position position="426"/>
    </location>
</feature>
<evidence type="ECO:0000250" key="1"/>
<evidence type="ECO:0000250" key="2">
    <source>
        <dbReference type="UniProtKB" id="Q9NZN8"/>
    </source>
</evidence>
<evidence type="ECO:0000256" key="3">
    <source>
        <dbReference type="SAM" id="MobiDB-lite"/>
    </source>
</evidence>
<evidence type="ECO:0000269" key="4">
    <source>
    </source>
</evidence>
<evidence type="ECO:0000303" key="5">
    <source>
    </source>
</evidence>
<evidence type="ECO:0000303" key="6">
    <source>
    </source>
</evidence>
<evidence type="ECO:0000305" key="7"/>
<evidence type="ECO:0007744" key="8">
    <source>
    </source>
</evidence>
<protein>
    <recommendedName>
        <fullName>CCR4-NOT transcription complex subunit 2</fullName>
    </recommendedName>
    <alternativeName>
        <fullName>CCR4-associated factor 2</fullName>
    </alternativeName>
</protein>
<keyword id="KW-0025">Alternative splicing</keyword>
<keyword id="KW-0963">Cytoplasm</keyword>
<keyword id="KW-0217">Developmental protein</keyword>
<keyword id="KW-0539">Nucleus</keyword>
<keyword id="KW-0597">Phosphoprotein</keyword>
<keyword id="KW-1185">Reference proteome</keyword>
<keyword id="KW-0678">Repressor</keyword>
<keyword id="KW-0943">RNA-mediated gene silencing</keyword>
<keyword id="KW-0804">Transcription</keyword>
<keyword id="KW-0805">Transcription regulation</keyword>
<keyword id="KW-0810">Translation regulation</keyword>
<dbReference type="EMBL" id="AK011231">
    <property type="protein sequence ID" value="BAB27481.1"/>
    <property type="molecule type" value="mRNA"/>
</dbReference>
<dbReference type="EMBL" id="AK078121">
    <property type="protein sequence ID" value="BAC37134.1"/>
    <property type="molecule type" value="mRNA"/>
</dbReference>
<dbReference type="EMBL" id="AK149767">
    <property type="protein sequence ID" value="BAE29072.1"/>
    <property type="molecule type" value="mRNA"/>
</dbReference>
<dbReference type="EMBL" id="BC043133">
    <property type="protein sequence ID" value="AAH43133.1"/>
    <property type="status" value="ALT_FRAME"/>
    <property type="molecule type" value="mRNA"/>
</dbReference>
<dbReference type="EMBL" id="BC063105">
    <property type="protein sequence ID" value="AAH63105.1"/>
    <property type="molecule type" value="mRNA"/>
</dbReference>
<dbReference type="EMBL" id="BC065171">
    <property type="protein sequence ID" value="AAH65171.1"/>
    <property type="molecule type" value="mRNA"/>
</dbReference>
<dbReference type="CCDS" id="CCDS36064.1">
    <molecule id="Q8C5L3-1"/>
</dbReference>
<dbReference type="CCDS" id="CCDS88089.1">
    <molecule id="Q8C5L3-3"/>
</dbReference>
<dbReference type="RefSeq" id="NP_001032935.2">
    <molecule id="Q8C5L3-1"/>
    <property type="nucleotide sequence ID" value="NM_001037846.3"/>
</dbReference>
<dbReference type="RefSeq" id="NP_001032936.2">
    <property type="nucleotide sequence ID" value="NM_001037847.2"/>
</dbReference>
<dbReference type="RefSeq" id="NP_001032937.1">
    <property type="nucleotide sequence ID" value="NM_001037848.3"/>
</dbReference>
<dbReference type="RefSeq" id="NP_001346176.1">
    <molecule id="Q8C5L3-2"/>
    <property type="nucleotide sequence ID" value="NM_001359247.1"/>
</dbReference>
<dbReference type="RefSeq" id="NP_001346177.1">
    <molecule id="Q8C5L3-2"/>
    <property type="nucleotide sequence ID" value="NM_001359248.1"/>
</dbReference>
<dbReference type="RefSeq" id="NP_001346178.1">
    <molecule id="Q8C5L3-2"/>
    <property type="nucleotide sequence ID" value="NM_001359249.1"/>
</dbReference>
<dbReference type="RefSeq" id="NP_001346179.1">
    <molecule id="Q8C5L3-2"/>
    <property type="nucleotide sequence ID" value="NM_001359250.1"/>
</dbReference>
<dbReference type="RefSeq" id="NP_001346180.1">
    <molecule id="Q8C5L3-2"/>
    <property type="nucleotide sequence ID" value="NM_001359251.1"/>
</dbReference>
<dbReference type="RefSeq" id="NP_001346181.1">
    <molecule id="Q8C5L3-2"/>
    <property type="nucleotide sequence ID" value="NM_001359252.1"/>
</dbReference>
<dbReference type="RefSeq" id="NP_001346492.1">
    <molecule id="Q8C5L3-3"/>
    <property type="nucleotide sequence ID" value="NM_001359563.1"/>
</dbReference>
<dbReference type="RefSeq" id="NP_082358.2">
    <property type="nucleotide sequence ID" value="NM_028082.2"/>
</dbReference>
<dbReference type="RefSeq" id="XP_006514238.1">
    <molecule id="Q8C5L3-1"/>
    <property type="nucleotide sequence ID" value="XM_006514175.5"/>
</dbReference>
<dbReference type="RefSeq" id="XP_006514240.1">
    <property type="nucleotide sequence ID" value="XM_006514177.3"/>
</dbReference>
<dbReference type="RefSeq" id="XP_006514242.1">
    <property type="nucleotide sequence ID" value="XM_006514179.3"/>
</dbReference>
<dbReference type="RefSeq" id="XP_006514243.1">
    <property type="nucleotide sequence ID" value="XM_006514180.1"/>
</dbReference>
<dbReference type="RefSeq" id="XP_006514244.1">
    <molecule id="Q8C5L3-2"/>
    <property type="nucleotide sequence ID" value="XM_006514181.3"/>
</dbReference>
<dbReference type="RefSeq" id="XP_006514246.1">
    <molecule id="Q8C5L3-3"/>
    <property type="nucleotide sequence ID" value="XM_006514183.3"/>
</dbReference>
<dbReference type="RefSeq" id="XP_006514247.1">
    <molecule id="Q8C5L3-3"/>
    <property type="nucleotide sequence ID" value="XM_006514184.3"/>
</dbReference>
<dbReference type="RefSeq" id="XP_017169595.1">
    <property type="nucleotide sequence ID" value="XM_017314106.1"/>
</dbReference>
<dbReference type="RefSeq" id="XP_017169596.1">
    <molecule id="Q8C5L3-2"/>
    <property type="nucleotide sequence ID" value="XM_017314107.2"/>
</dbReference>
<dbReference type="RefSeq" id="XP_017169597.1">
    <property type="nucleotide sequence ID" value="XM_017314108.1"/>
</dbReference>
<dbReference type="RefSeq" id="XP_017169598.1">
    <property type="nucleotide sequence ID" value="XM_017314109.1"/>
</dbReference>
<dbReference type="RefSeq" id="XP_030101156.1">
    <molecule id="Q8C5L3-1"/>
    <property type="nucleotide sequence ID" value="XM_030245296.2"/>
</dbReference>
<dbReference type="RefSeq" id="XP_030101157.1">
    <molecule id="Q8C5L3-2"/>
    <property type="nucleotide sequence ID" value="XM_030245297.2"/>
</dbReference>
<dbReference type="RefSeq" id="XP_030101159.1">
    <molecule id="Q8C5L3-3"/>
    <property type="nucleotide sequence ID" value="XM_030245299.2"/>
</dbReference>
<dbReference type="RefSeq" id="XP_036011926.1">
    <molecule id="Q8C5L3-2"/>
    <property type="nucleotide sequence ID" value="XM_036156033.1"/>
</dbReference>
<dbReference type="RefSeq" id="XP_036011927.1">
    <molecule id="Q8C5L3-2"/>
    <property type="nucleotide sequence ID" value="XM_036156034.1"/>
</dbReference>
<dbReference type="RefSeq" id="XP_036011928.1">
    <molecule id="Q8C5L3-3"/>
    <property type="nucleotide sequence ID" value="XM_036156035.1"/>
</dbReference>
<dbReference type="RefSeq" id="XP_036011929.1">
    <molecule id="Q8C5L3-3"/>
    <property type="nucleotide sequence ID" value="XM_036156036.1"/>
</dbReference>
<dbReference type="BioGRID" id="215128">
    <property type="interactions" value="22"/>
</dbReference>
<dbReference type="FunCoup" id="Q8C5L3">
    <property type="interactions" value="4491"/>
</dbReference>
<dbReference type="IntAct" id="Q8C5L3">
    <property type="interactions" value="19"/>
</dbReference>
<dbReference type="STRING" id="10090.ENSMUSP00000100902"/>
<dbReference type="GlyGen" id="Q8C5L3">
    <property type="glycosylation" value="9 sites, 1 O-linked glycan (9 sites)"/>
</dbReference>
<dbReference type="iPTMnet" id="Q8C5L3"/>
<dbReference type="PhosphoSitePlus" id="Q8C5L3"/>
<dbReference type="jPOST" id="Q8C5L3"/>
<dbReference type="PaxDb" id="10090-ENSMUSP00000100902"/>
<dbReference type="ProteomicsDB" id="283464">
    <molecule id="Q8C5L3-1"/>
</dbReference>
<dbReference type="ProteomicsDB" id="283465">
    <molecule id="Q8C5L3-2"/>
</dbReference>
<dbReference type="ProteomicsDB" id="283466">
    <molecule id="Q8C5L3-3"/>
</dbReference>
<dbReference type="Pumba" id="Q8C5L3"/>
<dbReference type="Antibodypedia" id="17029">
    <property type="antibodies" value="441 antibodies from 33 providers"/>
</dbReference>
<dbReference type="DNASU" id="72068"/>
<dbReference type="Ensembl" id="ENSMUST00000105265.8">
    <molecule id="Q8C5L3-3"/>
    <property type="protein sequence ID" value="ENSMUSP00000100900.2"/>
    <property type="gene ID" value="ENSMUSG00000020166.16"/>
</dbReference>
<dbReference type="Ensembl" id="ENSMUST00000105267.8">
    <molecule id="Q8C5L3-1"/>
    <property type="protein sequence ID" value="ENSMUSP00000100902.2"/>
    <property type="gene ID" value="ENSMUSG00000020166.16"/>
</dbReference>
<dbReference type="Ensembl" id="ENSMUST00000169921.8">
    <molecule id="Q8C5L3-1"/>
    <property type="protein sequence ID" value="ENSMUSP00000132152.2"/>
    <property type="gene ID" value="ENSMUSG00000020166.16"/>
</dbReference>
<dbReference type="GeneID" id="72068"/>
<dbReference type="KEGG" id="mmu:72068"/>
<dbReference type="UCSC" id="uc007hcb.2">
    <molecule id="Q8C5L3-1"/>
    <property type="organism name" value="mouse"/>
</dbReference>
<dbReference type="AGR" id="MGI:1919318"/>
<dbReference type="CTD" id="4848"/>
<dbReference type="MGI" id="MGI:1919318">
    <property type="gene designation" value="Cnot2"/>
</dbReference>
<dbReference type="VEuPathDB" id="HostDB:ENSMUSG00000020166"/>
<dbReference type="eggNOG" id="KOG2151">
    <property type="taxonomic scope" value="Eukaryota"/>
</dbReference>
<dbReference type="GeneTree" id="ENSGT00390000001285"/>
<dbReference type="HOGENOM" id="CLU_033275_1_0_1"/>
<dbReference type="InParanoid" id="Q8C5L3"/>
<dbReference type="OMA" id="DYHDESL"/>
<dbReference type="OrthoDB" id="25391at2759"/>
<dbReference type="PhylomeDB" id="Q8C5L3"/>
<dbReference type="TreeFam" id="TF313102"/>
<dbReference type="Reactome" id="R-MMU-429947">
    <property type="pathway name" value="Deadenylation of mRNA"/>
</dbReference>
<dbReference type="Reactome" id="R-MMU-6804115">
    <property type="pathway name" value="TP53 regulates transcription of additional cell cycle genes whose exact role in the p53 pathway remain uncertain"/>
</dbReference>
<dbReference type="BioGRID-ORCS" id="72068">
    <property type="hits" value="15 hits in 77 CRISPR screens"/>
</dbReference>
<dbReference type="ChiTaRS" id="Cnot2">
    <property type="organism name" value="mouse"/>
</dbReference>
<dbReference type="PRO" id="PR:Q8C5L3"/>
<dbReference type="Proteomes" id="UP000000589">
    <property type="component" value="Chromosome 10"/>
</dbReference>
<dbReference type="RNAct" id="Q8C5L3">
    <property type="molecule type" value="protein"/>
</dbReference>
<dbReference type="Bgee" id="ENSMUSG00000020166">
    <property type="expression patterns" value="Expressed in indifferent gonad and 267 other cell types or tissues"/>
</dbReference>
<dbReference type="ExpressionAtlas" id="Q8C5L3">
    <property type="expression patterns" value="baseline and differential"/>
</dbReference>
<dbReference type="GO" id="GO:0030014">
    <property type="term" value="C:CCR4-NOT complex"/>
    <property type="evidence" value="ECO:0000250"/>
    <property type="project" value="UniProtKB"/>
</dbReference>
<dbReference type="GO" id="GO:0030015">
    <property type="term" value="C:CCR4-NOT core complex"/>
    <property type="evidence" value="ECO:0007669"/>
    <property type="project" value="InterPro"/>
</dbReference>
<dbReference type="GO" id="GO:0005737">
    <property type="term" value="C:cytoplasm"/>
    <property type="evidence" value="ECO:0000250"/>
    <property type="project" value="UniProtKB"/>
</dbReference>
<dbReference type="GO" id="GO:0005829">
    <property type="term" value="C:cytosol"/>
    <property type="evidence" value="ECO:0000304"/>
    <property type="project" value="Reactome"/>
</dbReference>
<dbReference type="GO" id="GO:0005654">
    <property type="term" value="C:nucleoplasm"/>
    <property type="evidence" value="ECO:0007669"/>
    <property type="project" value="Ensembl"/>
</dbReference>
<dbReference type="GO" id="GO:0005886">
    <property type="term" value="C:plasma membrane"/>
    <property type="evidence" value="ECO:0007669"/>
    <property type="project" value="Ensembl"/>
</dbReference>
<dbReference type="GO" id="GO:0004535">
    <property type="term" value="F:poly(A)-specific ribonuclease activity"/>
    <property type="evidence" value="ECO:0007669"/>
    <property type="project" value="Ensembl"/>
</dbReference>
<dbReference type="GO" id="GO:0001222">
    <property type="term" value="F:transcription corepressor binding"/>
    <property type="evidence" value="ECO:0000250"/>
    <property type="project" value="UniProtKB"/>
</dbReference>
<dbReference type="GO" id="GO:0033147">
    <property type="term" value="P:negative regulation of intracellular estrogen receptor signaling pathway"/>
    <property type="evidence" value="ECO:0000250"/>
    <property type="project" value="UniProtKB"/>
</dbReference>
<dbReference type="GO" id="GO:0000122">
    <property type="term" value="P:negative regulation of transcription by RNA polymerase II"/>
    <property type="evidence" value="ECO:0000250"/>
    <property type="project" value="UniProtKB"/>
</dbReference>
<dbReference type="GO" id="GO:0010606">
    <property type="term" value="P:positive regulation of cytoplasmic mRNA processing body assembly"/>
    <property type="evidence" value="ECO:0000250"/>
    <property type="project" value="UniProtKB"/>
</dbReference>
<dbReference type="GO" id="GO:2000036">
    <property type="term" value="P:regulation of stem cell population maintenance"/>
    <property type="evidence" value="ECO:0000315"/>
    <property type="project" value="UniProtKB"/>
</dbReference>
<dbReference type="GO" id="GO:0006417">
    <property type="term" value="P:regulation of translation"/>
    <property type="evidence" value="ECO:0007669"/>
    <property type="project" value="UniProtKB-KW"/>
</dbReference>
<dbReference type="GO" id="GO:0031047">
    <property type="term" value="P:regulatory ncRNA-mediated gene silencing"/>
    <property type="evidence" value="ECO:0007669"/>
    <property type="project" value="UniProtKB-KW"/>
</dbReference>
<dbReference type="GO" id="GO:0001829">
    <property type="term" value="P:trophectodermal cell differentiation"/>
    <property type="evidence" value="ECO:0000315"/>
    <property type="project" value="UniProtKB"/>
</dbReference>
<dbReference type="FunFam" id="2.30.30.1020:FF:000001">
    <property type="entry name" value="Putative CCR4-NOT transcription complex subunit 2"/>
    <property type="match status" value="1"/>
</dbReference>
<dbReference type="Gene3D" id="2.30.30.1020">
    <property type="entry name" value="CCR4-NOT complex subunit 2/3/5, C-terminal domain"/>
    <property type="match status" value="1"/>
</dbReference>
<dbReference type="InterPro" id="IPR038635">
    <property type="entry name" value="CCR4-NOT_su2/3/5_C_sf"/>
</dbReference>
<dbReference type="InterPro" id="IPR040168">
    <property type="entry name" value="Not2/3/5"/>
</dbReference>
<dbReference type="InterPro" id="IPR007282">
    <property type="entry name" value="NOT2/3/5_C"/>
</dbReference>
<dbReference type="PANTHER" id="PTHR23326">
    <property type="entry name" value="CCR4 NOT-RELATED"/>
    <property type="match status" value="1"/>
</dbReference>
<dbReference type="Pfam" id="PF04153">
    <property type="entry name" value="NOT2_3_5_C"/>
    <property type="match status" value="1"/>
</dbReference>
<organism>
    <name type="scientific">Mus musculus</name>
    <name type="common">Mouse</name>
    <dbReference type="NCBI Taxonomy" id="10090"/>
    <lineage>
        <taxon>Eukaryota</taxon>
        <taxon>Metazoa</taxon>
        <taxon>Chordata</taxon>
        <taxon>Craniata</taxon>
        <taxon>Vertebrata</taxon>
        <taxon>Euteleostomi</taxon>
        <taxon>Mammalia</taxon>
        <taxon>Eutheria</taxon>
        <taxon>Euarchontoglires</taxon>
        <taxon>Glires</taxon>
        <taxon>Rodentia</taxon>
        <taxon>Myomorpha</taxon>
        <taxon>Muroidea</taxon>
        <taxon>Muridae</taxon>
        <taxon>Murinae</taxon>
        <taxon>Mus</taxon>
        <taxon>Mus</taxon>
    </lineage>
</organism>
<reference key="1">
    <citation type="journal article" date="2005" name="Science">
        <title>The transcriptional landscape of the mammalian genome.</title>
        <authorList>
            <person name="Carninci P."/>
            <person name="Kasukawa T."/>
            <person name="Katayama S."/>
            <person name="Gough J."/>
            <person name="Frith M.C."/>
            <person name="Maeda N."/>
            <person name="Oyama R."/>
            <person name="Ravasi T."/>
            <person name="Lenhard B."/>
            <person name="Wells C."/>
            <person name="Kodzius R."/>
            <person name="Shimokawa K."/>
            <person name="Bajic V.B."/>
            <person name="Brenner S.E."/>
            <person name="Batalov S."/>
            <person name="Forrest A.R."/>
            <person name="Zavolan M."/>
            <person name="Davis M.J."/>
            <person name="Wilming L.G."/>
            <person name="Aidinis V."/>
            <person name="Allen J.E."/>
            <person name="Ambesi-Impiombato A."/>
            <person name="Apweiler R."/>
            <person name="Aturaliya R.N."/>
            <person name="Bailey T.L."/>
            <person name="Bansal M."/>
            <person name="Baxter L."/>
            <person name="Beisel K.W."/>
            <person name="Bersano T."/>
            <person name="Bono H."/>
            <person name="Chalk A.M."/>
            <person name="Chiu K.P."/>
            <person name="Choudhary V."/>
            <person name="Christoffels A."/>
            <person name="Clutterbuck D.R."/>
            <person name="Crowe M.L."/>
            <person name="Dalla E."/>
            <person name="Dalrymple B.P."/>
            <person name="de Bono B."/>
            <person name="Della Gatta G."/>
            <person name="di Bernardo D."/>
            <person name="Down T."/>
            <person name="Engstrom P."/>
            <person name="Fagiolini M."/>
            <person name="Faulkner G."/>
            <person name="Fletcher C.F."/>
            <person name="Fukushima T."/>
            <person name="Furuno M."/>
            <person name="Futaki S."/>
            <person name="Gariboldi M."/>
            <person name="Georgii-Hemming P."/>
            <person name="Gingeras T.R."/>
            <person name="Gojobori T."/>
            <person name="Green R.E."/>
            <person name="Gustincich S."/>
            <person name="Harbers M."/>
            <person name="Hayashi Y."/>
            <person name="Hensch T.K."/>
            <person name="Hirokawa N."/>
            <person name="Hill D."/>
            <person name="Huminiecki L."/>
            <person name="Iacono M."/>
            <person name="Ikeo K."/>
            <person name="Iwama A."/>
            <person name="Ishikawa T."/>
            <person name="Jakt M."/>
            <person name="Kanapin A."/>
            <person name="Katoh M."/>
            <person name="Kawasawa Y."/>
            <person name="Kelso J."/>
            <person name="Kitamura H."/>
            <person name="Kitano H."/>
            <person name="Kollias G."/>
            <person name="Krishnan S.P."/>
            <person name="Kruger A."/>
            <person name="Kummerfeld S.K."/>
            <person name="Kurochkin I.V."/>
            <person name="Lareau L.F."/>
            <person name="Lazarevic D."/>
            <person name="Lipovich L."/>
            <person name="Liu J."/>
            <person name="Liuni S."/>
            <person name="McWilliam S."/>
            <person name="Madan Babu M."/>
            <person name="Madera M."/>
            <person name="Marchionni L."/>
            <person name="Matsuda H."/>
            <person name="Matsuzawa S."/>
            <person name="Miki H."/>
            <person name="Mignone F."/>
            <person name="Miyake S."/>
            <person name="Morris K."/>
            <person name="Mottagui-Tabar S."/>
            <person name="Mulder N."/>
            <person name="Nakano N."/>
            <person name="Nakauchi H."/>
            <person name="Ng P."/>
            <person name="Nilsson R."/>
            <person name="Nishiguchi S."/>
            <person name="Nishikawa S."/>
            <person name="Nori F."/>
            <person name="Ohara O."/>
            <person name="Okazaki Y."/>
            <person name="Orlando V."/>
            <person name="Pang K.C."/>
            <person name="Pavan W.J."/>
            <person name="Pavesi G."/>
            <person name="Pesole G."/>
            <person name="Petrovsky N."/>
            <person name="Piazza S."/>
            <person name="Reed J."/>
            <person name="Reid J.F."/>
            <person name="Ring B.Z."/>
            <person name="Ringwald M."/>
            <person name="Rost B."/>
            <person name="Ruan Y."/>
            <person name="Salzberg S.L."/>
            <person name="Sandelin A."/>
            <person name="Schneider C."/>
            <person name="Schoenbach C."/>
            <person name="Sekiguchi K."/>
            <person name="Semple C.A."/>
            <person name="Seno S."/>
            <person name="Sessa L."/>
            <person name="Sheng Y."/>
            <person name="Shibata Y."/>
            <person name="Shimada H."/>
            <person name="Shimada K."/>
            <person name="Silva D."/>
            <person name="Sinclair B."/>
            <person name="Sperling S."/>
            <person name="Stupka E."/>
            <person name="Sugiura K."/>
            <person name="Sultana R."/>
            <person name="Takenaka Y."/>
            <person name="Taki K."/>
            <person name="Tammoja K."/>
            <person name="Tan S.L."/>
            <person name="Tang S."/>
            <person name="Taylor M.S."/>
            <person name="Tegner J."/>
            <person name="Teichmann S.A."/>
            <person name="Ueda H.R."/>
            <person name="van Nimwegen E."/>
            <person name="Verardo R."/>
            <person name="Wei C.L."/>
            <person name="Yagi K."/>
            <person name="Yamanishi H."/>
            <person name="Zabarovsky E."/>
            <person name="Zhu S."/>
            <person name="Zimmer A."/>
            <person name="Hide W."/>
            <person name="Bult C."/>
            <person name="Grimmond S.M."/>
            <person name="Teasdale R.D."/>
            <person name="Liu E.T."/>
            <person name="Brusic V."/>
            <person name="Quackenbush J."/>
            <person name="Wahlestedt C."/>
            <person name="Mattick J.S."/>
            <person name="Hume D.A."/>
            <person name="Kai C."/>
            <person name="Sasaki D."/>
            <person name="Tomaru Y."/>
            <person name="Fukuda S."/>
            <person name="Kanamori-Katayama M."/>
            <person name="Suzuki M."/>
            <person name="Aoki J."/>
            <person name="Arakawa T."/>
            <person name="Iida J."/>
            <person name="Imamura K."/>
            <person name="Itoh M."/>
            <person name="Kato T."/>
            <person name="Kawaji H."/>
            <person name="Kawagashira N."/>
            <person name="Kawashima T."/>
            <person name="Kojima M."/>
            <person name="Kondo S."/>
            <person name="Konno H."/>
            <person name="Nakano K."/>
            <person name="Ninomiya N."/>
            <person name="Nishio T."/>
            <person name="Okada M."/>
            <person name="Plessy C."/>
            <person name="Shibata K."/>
            <person name="Shiraki T."/>
            <person name="Suzuki S."/>
            <person name="Tagami M."/>
            <person name="Waki K."/>
            <person name="Watahiki A."/>
            <person name="Okamura-Oho Y."/>
            <person name="Suzuki H."/>
            <person name="Kawai J."/>
            <person name="Hayashizaki Y."/>
        </authorList>
    </citation>
    <scope>NUCLEOTIDE SEQUENCE [LARGE SCALE MRNA] (ISOFORMS 1 AND 3)</scope>
    <source>
        <strain>C57BL/6J</strain>
        <tissue>Bone marrow</tissue>
        <tissue>Embryo</tissue>
        <tissue>Medulla oblongata</tissue>
    </source>
</reference>
<reference key="2">
    <citation type="journal article" date="2004" name="Genome Res.">
        <title>The status, quality, and expansion of the NIH full-length cDNA project: the Mammalian Gene Collection (MGC).</title>
        <authorList>
            <consortium name="The MGC Project Team"/>
        </authorList>
    </citation>
    <scope>NUCLEOTIDE SEQUENCE [LARGE SCALE MRNA] (ISOFORMS 1 AND 2)</scope>
    <source>
        <strain>C57BL/6J</strain>
        <tissue>Brain</tissue>
        <tissue>Mammary tumor</tissue>
    </source>
</reference>
<reference key="3">
    <citation type="journal article" date="2010" name="Cell">
        <title>A tissue-specific atlas of mouse protein phosphorylation and expression.</title>
        <authorList>
            <person name="Huttlin E.L."/>
            <person name="Jedrychowski M.P."/>
            <person name="Elias J.E."/>
            <person name="Goswami T."/>
            <person name="Rad R."/>
            <person name="Beausoleil S.A."/>
            <person name="Villen J."/>
            <person name="Haas W."/>
            <person name="Sowa M.E."/>
            <person name="Gygi S.P."/>
        </authorList>
    </citation>
    <scope>PHOSPHORYLATION [LARGE SCALE ANALYSIS] AT SER-157; SER-165 AND SER-169</scope>
    <scope>IDENTIFICATION BY MASS SPECTROMETRY [LARGE SCALE ANALYSIS]</scope>
    <source>
        <tissue>Brain</tissue>
        <tissue>Brown adipose tissue</tissue>
        <tissue>Heart</tissue>
        <tissue>Kidney</tissue>
        <tissue>Liver</tissue>
        <tissue>Lung</tissue>
        <tissue>Pancreas</tissue>
        <tissue>Spleen</tissue>
        <tissue>Testis</tissue>
    </source>
</reference>
<reference key="4">
    <citation type="journal article" date="2012" name="Stem Cells">
        <title>Cnot1, Cnot2, and Cnot3 maintain mouse and human ESC identity and inhibit extraembryonic differentiation.</title>
        <authorList>
            <person name="Zheng X."/>
            <person name="Dumitru R."/>
            <person name="Lackford B.L."/>
            <person name="Freudenberg J.M."/>
            <person name="Singh A.P."/>
            <person name="Archer T.K."/>
            <person name="Jothi R."/>
            <person name="Hu G."/>
        </authorList>
    </citation>
    <scope>FUNCTION</scope>
    <scope>DEVELOPMENTAL STAGE</scope>
</reference>
<reference key="5">
    <citation type="journal article" date="2014" name="Mol. Cell. Proteomics">
        <title>Immunoaffinity enrichment and mass spectrometry analysis of protein methylation.</title>
        <authorList>
            <person name="Guo A."/>
            <person name="Gu H."/>
            <person name="Zhou J."/>
            <person name="Mulhern D."/>
            <person name="Wang Y."/>
            <person name="Lee K.A."/>
            <person name="Yang V."/>
            <person name="Aguiar M."/>
            <person name="Kornhauser J."/>
            <person name="Jia X."/>
            <person name="Ren J."/>
            <person name="Beausoleil S.A."/>
            <person name="Silva J.C."/>
            <person name="Vemulapalli V."/>
            <person name="Bedford M.T."/>
            <person name="Comb M.J."/>
        </authorList>
    </citation>
    <scope>IDENTIFICATION BY MASS SPECTROMETRY [LARGE SCALE ANALYSIS]</scope>
    <source>
        <tissue>Brain</tissue>
        <tissue>Embryo</tissue>
    </source>
</reference>
<sequence>MVRTDGHTLSEKRNYQVTNSMFGASRKKFVEGVDSDYHDENMYYSQSSMFPHRSEKDMLASPSTSGQLSQFGASLYGQQSALGLPMRGMSNNTPQLNRSLSQGTQLPSHVTPTTGVPTMSLHTPPSPSRGILPMNPRNMMNHSQVGQGIGIPSRTNSMSSSGLGSPNRSSPSIICMPKQQPSRQPFTVNSMSGFGMNRNQAFGMNNSLSSNIFNGTDGSENVTGLDLSDFPALADRNRREGSGNPTPLINPLAGRAPYVGMVTKPANEQSQDFSIHNEDFPALPGSSYKDPTSSNDDSKSNLSTSGKTTSSTDGPKFPGDKSSTTQNNNQQKKGIQVLPDGRVTNIPQGMVTDQFGMIGLLTFIRAAETDPGMVHLALGSDLTTLGLNLNSPENLYPKFASPWASSPCRPQDIDFHVPSEYLTNIHIRDKLAAIKLGRYGEDLLFYLYYMNGGDVLQLLAAVELFNRDWRYHKEERVWITRAPGMEPTMKTNTYERGTYYFFDCLNWRKVAKEFHLEYDKLEERPHLPSTFNYNPAQQAF</sequence>
<accession>Q8C5L3</accession>
<accession>Q3UE39</accession>
<accession>Q80YA5</accession>
<accession>Q9D0P1</accession>